<organism>
    <name type="scientific">Oryza sativa subsp. japonica</name>
    <name type="common">Rice</name>
    <dbReference type="NCBI Taxonomy" id="39947"/>
    <lineage>
        <taxon>Eukaryota</taxon>
        <taxon>Viridiplantae</taxon>
        <taxon>Streptophyta</taxon>
        <taxon>Embryophyta</taxon>
        <taxon>Tracheophyta</taxon>
        <taxon>Spermatophyta</taxon>
        <taxon>Magnoliopsida</taxon>
        <taxon>Liliopsida</taxon>
        <taxon>Poales</taxon>
        <taxon>Poaceae</taxon>
        <taxon>BOP clade</taxon>
        <taxon>Oryzoideae</taxon>
        <taxon>Oryzeae</taxon>
        <taxon>Oryzinae</taxon>
        <taxon>Oryza</taxon>
        <taxon>Oryza sativa</taxon>
    </lineage>
</organism>
<proteinExistence type="evidence at transcript level"/>
<evidence type="ECO:0000255" key="1"/>
<evidence type="ECO:0000269" key="2">
    <source>
    </source>
</evidence>
<evidence type="ECO:0000305" key="3"/>
<keyword id="KW-0150">Chloroplast</keyword>
<keyword id="KW-0472">Membrane</keyword>
<keyword id="KW-0934">Plastid</keyword>
<keyword id="KW-0670">Pyruvate</keyword>
<keyword id="KW-1185">Reference proteome</keyword>
<keyword id="KW-0762">Sugar transport</keyword>
<keyword id="KW-0809">Transit peptide</keyword>
<keyword id="KW-0812">Transmembrane</keyword>
<keyword id="KW-1133">Transmembrane helix</keyword>
<keyword id="KW-0813">Transport</keyword>
<accession>Q5VQL3</accession>
<accession>A0A0P0UYM6</accession>
<sequence>MQRAAAASRATAWSTARHGAARVTASASFSGGGGIVAGAALPLRVRGGQLMSLPLLSGGRAVTARVAAAEAPLPADDADAAAGRERGALAETAQLGAMIVAWYLLNIYFNIYNKQVLQPLPFPYTITAFQLAFGSFVIFLMWALKLHPAPRISISQLAKIAPLAAGHMLGTVFTNMSLSKVAVSFTHTIKASEPFFTVLLSAFFLGETPSLLVLGSLVPIVGGVALASLTELSFNWIGFWSAMASNLLYQSRNVLSKKLLGGEEEALDDINLFSILTILSFLLSLPLMLFSEGVKFSPGYLRSTGLNLQELCVRAALAGFCFHGYQKLSYLILARVSPVTHSVANCVKRVVVIVASVLFFRTPISPVNALGTGVALGGVFLYSRLKRTKPKNA</sequence>
<reference key="1">
    <citation type="journal article" date="2002" name="Nature">
        <title>The genome sequence and structure of rice chromosome 1.</title>
        <authorList>
            <person name="Sasaki T."/>
            <person name="Matsumoto T."/>
            <person name="Yamamoto K."/>
            <person name="Sakata K."/>
            <person name="Baba T."/>
            <person name="Katayose Y."/>
            <person name="Wu J."/>
            <person name="Niimura Y."/>
            <person name="Cheng Z."/>
            <person name="Nagamura Y."/>
            <person name="Antonio B.A."/>
            <person name="Kanamori H."/>
            <person name="Hosokawa S."/>
            <person name="Masukawa M."/>
            <person name="Arikawa K."/>
            <person name="Chiden Y."/>
            <person name="Hayashi M."/>
            <person name="Okamoto M."/>
            <person name="Ando T."/>
            <person name="Aoki H."/>
            <person name="Arita K."/>
            <person name="Hamada M."/>
            <person name="Harada C."/>
            <person name="Hijishita S."/>
            <person name="Honda M."/>
            <person name="Ichikawa Y."/>
            <person name="Idonuma A."/>
            <person name="Iijima M."/>
            <person name="Ikeda M."/>
            <person name="Ikeno M."/>
            <person name="Ito S."/>
            <person name="Ito T."/>
            <person name="Ito Y."/>
            <person name="Ito Y."/>
            <person name="Iwabuchi A."/>
            <person name="Kamiya K."/>
            <person name="Karasawa W."/>
            <person name="Katagiri S."/>
            <person name="Kikuta A."/>
            <person name="Kobayashi N."/>
            <person name="Kono I."/>
            <person name="Machita K."/>
            <person name="Maehara T."/>
            <person name="Mizuno H."/>
            <person name="Mizubayashi T."/>
            <person name="Mukai Y."/>
            <person name="Nagasaki H."/>
            <person name="Nakashima M."/>
            <person name="Nakama Y."/>
            <person name="Nakamichi Y."/>
            <person name="Nakamura M."/>
            <person name="Namiki N."/>
            <person name="Negishi M."/>
            <person name="Ohta I."/>
            <person name="Ono N."/>
            <person name="Saji S."/>
            <person name="Sakai K."/>
            <person name="Shibata M."/>
            <person name="Shimokawa T."/>
            <person name="Shomura A."/>
            <person name="Song J."/>
            <person name="Takazaki Y."/>
            <person name="Terasawa K."/>
            <person name="Tsuji K."/>
            <person name="Waki K."/>
            <person name="Yamagata H."/>
            <person name="Yamane H."/>
            <person name="Yoshiki S."/>
            <person name="Yoshihara R."/>
            <person name="Yukawa K."/>
            <person name="Zhong H."/>
            <person name="Iwama H."/>
            <person name="Endo T."/>
            <person name="Ito H."/>
            <person name="Hahn J.H."/>
            <person name="Kim H.-I."/>
            <person name="Eun M.-Y."/>
            <person name="Yano M."/>
            <person name="Jiang J."/>
            <person name="Gojobori T."/>
        </authorList>
    </citation>
    <scope>NUCLEOTIDE SEQUENCE [LARGE SCALE GENOMIC DNA]</scope>
    <source>
        <strain>cv. Nipponbare</strain>
    </source>
</reference>
<reference key="2">
    <citation type="journal article" date="2005" name="Nature">
        <title>The map-based sequence of the rice genome.</title>
        <authorList>
            <consortium name="International rice genome sequencing project (IRGSP)"/>
        </authorList>
    </citation>
    <scope>NUCLEOTIDE SEQUENCE [LARGE SCALE GENOMIC DNA]</scope>
    <source>
        <strain>cv. Nipponbare</strain>
    </source>
</reference>
<reference key="3">
    <citation type="journal article" date="2008" name="Nucleic Acids Res.">
        <title>The rice annotation project database (RAP-DB): 2008 update.</title>
        <authorList>
            <consortium name="The rice annotation project (RAP)"/>
        </authorList>
    </citation>
    <scope>GENOME REANNOTATION</scope>
    <source>
        <strain>cv. Nipponbare</strain>
    </source>
</reference>
<reference key="4">
    <citation type="journal article" date="2013" name="Rice">
        <title>Improvement of the Oryza sativa Nipponbare reference genome using next generation sequence and optical map data.</title>
        <authorList>
            <person name="Kawahara Y."/>
            <person name="de la Bastide M."/>
            <person name="Hamilton J.P."/>
            <person name="Kanamori H."/>
            <person name="McCombie W.R."/>
            <person name="Ouyang S."/>
            <person name="Schwartz D.C."/>
            <person name="Tanaka T."/>
            <person name="Wu J."/>
            <person name="Zhou S."/>
            <person name="Childs K.L."/>
            <person name="Davidson R.M."/>
            <person name="Lin H."/>
            <person name="Quesada-Ocampo L."/>
            <person name="Vaillancourt B."/>
            <person name="Sakai H."/>
            <person name="Lee S.S."/>
            <person name="Kim J."/>
            <person name="Numa H."/>
            <person name="Itoh T."/>
            <person name="Buell C.R."/>
            <person name="Matsumoto T."/>
        </authorList>
    </citation>
    <scope>GENOME REANNOTATION</scope>
    <source>
        <strain>cv. Nipponbare</strain>
    </source>
</reference>
<reference key="5">
    <citation type="journal article" date="2003" name="Science">
        <title>Collection, mapping, and annotation of over 28,000 cDNA clones from japonica rice.</title>
        <authorList>
            <consortium name="The rice full-length cDNA consortium"/>
        </authorList>
    </citation>
    <scope>NUCLEOTIDE SEQUENCE [LARGE SCALE MRNA]</scope>
    <source>
        <strain>cv. Nipponbare</strain>
    </source>
</reference>
<reference key="6">
    <citation type="journal article" date="2007" name="Plant Cell Physiol.">
        <title>A cell-free translation and proteoliposome reconstitution system for functional analysis of plant solute transporters.</title>
        <authorList>
            <person name="Nozawa A."/>
            <person name="Nanamiya H."/>
            <person name="Miyata T."/>
            <person name="Linka N."/>
            <person name="Endo Y."/>
            <person name="Weber A.P."/>
            <person name="Tozawa Y."/>
        </authorList>
    </citation>
    <scope>FUNCTION</scope>
</reference>
<comment type="function">
    <text evidence="2">Phosphoenolpyruvate/phosphate translocator that transports phosphoenolpyruvate (PEP) and dihydroxyacetone phosphate.</text>
</comment>
<comment type="subcellular location">
    <subcellularLocation>
        <location evidence="3">Plastid</location>
        <location evidence="3">Chloroplast membrane</location>
        <topology evidence="3">Multi-pass membrane protein</topology>
    </subcellularLocation>
</comment>
<comment type="similarity">
    <text evidence="3">Belongs to the TPT transporter family. PPT (TC 2.A.7.9) subfamily.</text>
</comment>
<protein>
    <recommendedName>
        <fullName>Phosphoenolpyruvate/phosphate translocator 3, chloroplastic</fullName>
        <shortName>OsPPT3</shortName>
    </recommendedName>
</protein>
<dbReference type="EMBL" id="AP003282">
    <property type="protein sequence ID" value="BAD68262.1"/>
    <property type="molecule type" value="Genomic_DNA"/>
</dbReference>
<dbReference type="EMBL" id="AP008207">
    <property type="protein sequence ID" value="BAF04064.1"/>
    <property type="molecule type" value="Genomic_DNA"/>
</dbReference>
<dbReference type="EMBL" id="AP014957">
    <property type="protein sequence ID" value="BAS70631.1"/>
    <property type="molecule type" value="Genomic_DNA"/>
</dbReference>
<dbReference type="EMBL" id="AK060343">
    <property type="status" value="NOT_ANNOTATED_CDS"/>
    <property type="molecule type" value="mRNA"/>
</dbReference>
<dbReference type="RefSeq" id="XP_015621423.1">
    <property type="nucleotide sequence ID" value="XM_015765937.1"/>
</dbReference>
<dbReference type="RefSeq" id="XP_015621424.1">
    <property type="nucleotide sequence ID" value="XM_015765938.1"/>
</dbReference>
<dbReference type="SMR" id="Q5VQL3"/>
<dbReference type="FunCoup" id="Q5VQL3">
    <property type="interactions" value="2214"/>
</dbReference>
<dbReference type="PaxDb" id="39947-Q5VQL3"/>
<dbReference type="EnsemblPlants" id="Os01t0172100-01">
    <property type="protein sequence ID" value="Os01t0172100-01"/>
    <property type="gene ID" value="Os01g0172100"/>
</dbReference>
<dbReference type="Gramene" id="Os01t0172100-01">
    <property type="protein sequence ID" value="Os01t0172100-01"/>
    <property type="gene ID" value="Os01g0172100"/>
</dbReference>
<dbReference type="KEGG" id="dosa:Os01g0172100"/>
<dbReference type="eggNOG" id="KOG1441">
    <property type="taxonomic scope" value="Eukaryota"/>
</dbReference>
<dbReference type="HOGENOM" id="CLU_019048_0_0_1"/>
<dbReference type="InParanoid" id="Q5VQL3"/>
<dbReference type="OMA" id="MFATWYL"/>
<dbReference type="OrthoDB" id="6418713at2759"/>
<dbReference type="Proteomes" id="UP000000763">
    <property type="component" value="Chromosome 1"/>
</dbReference>
<dbReference type="Proteomes" id="UP000059680">
    <property type="component" value="Chromosome 1"/>
</dbReference>
<dbReference type="GO" id="GO:0031969">
    <property type="term" value="C:chloroplast membrane"/>
    <property type="evidence" value="ECO:0007669"/>
    <property type="project" value="UniProtKB-SubCell"/>
</dbReference>
<dbReference type="GO" id="GO:0005794">
    <property type="term" value="C:Golgi apparatus"/>
    <property type="evidence" value="ECO:0000318"/>
    <property type="project" value="GO_Central"/>
</dbReference>
<dbReference type="GO" id="GO:0015121">
    <property type="term" value="F:phosphoenolpyruvate:phosphate antiporter activity"/>
    <property type="evidence" value="ECO:0000314"/>
    <property type="project" value="UniProtKB"/>
</dbReference>
<dbReference type="GO" id="GO:0071917">
    <property type="term" value="F:triose-phosphate transmembrane transporter activity"/>
    <property type="evidence" value="ECO:0000314"/>
    <property type="project" value="UniProtKB"/>
</dbReference>
<dbReference type="GO" id="GO:0009670">
    <property type="term" value="F:triose-phosphate:phosphate antiporter activity"/>
    <property type="evidence" value="ECO:0000318"/>
    <property type="project" value="GO_Central"/>
</dbReference>
<dbReference type="GO" id="GO:0015714">
    <property type="term" value="P:phosphoenolpyruvate transport"/>
    <property type="evidence" value="ECO:0000314"/>
    <property type="project" value="UniProtKB"/>
</dbReference>
<dbReference type="GO" id="GO:0035436">
    <property type="term" value="P:triose phosphate transmembrane transport"/>
    <property type="evidence" value="ECO:0000314"/>
    <property type="project" value="UniProtKB"/>
</dbReference>
<dbReference type="InterPro" id="IPR004853">
    <property type="entry name" value="Sugar_P_trans_dom"/>
</dbReference>
<dbReference type="InterPro" id="IPR004696">
    <property type="entry name" value="Tpt_PEP_transl"/>
</dbReference>
<dbReference type="InterPro" id="IPR050186">
    <property type="entry name" value="TPT_transporter"/>
</dbReference>
<dbReference type="NCBIfam" id="TIGR00817">
    <property type="entry name" value="tpt"/>
    <property type="match status" value="1"/>
</dbReference>
<dbReference type="PANTHER" id="PTHR11132">
    <property type="entry name" value="SOLUTE CARRIER FAMILY 35"/>
    <property type="match status" value="1"/>
</dbReference>
<dbReference type="Pfam" id="PF03151">
    <property type="entry name" value="TPT"/>
    <property type="match status" value="1"/>
</dbReference>
<dbReference type="SUPFAM" id="SSF103481">
    <property type="entry name" value="Multidrug resistance efflux transporter EmrE"/>
    <property type="match status" value="2"/>
</dbReference>
<name>PPT3_ORYSJ</name>
<feature type="transit peptide" description="Chloroplast" evidence="1">
    <location>
        <begin position="1"/>
        <end position="65"/>
    </location>
</feature>
<feature type="chain" id="PRO_0000406103" description="Phosphoenolpyruvate/phosphate translocator 3, chloroplastic">
    <location>
        <begin position="66"/>
        <end position="393"/>
    </location>
</feature>
<feature type="transmembrane region" description="Helical" evidence="1">
    <location>
        <begin position="89"/>
        <end position="109"/>
    </location>
</feature>
<feature type="transmembrane region" description="Helical" evidence="1">
    <location>
        <begin position="124"/>
        <end position="144"/>
    </location>
</feature>
<feature type="transmembrane region" description="Helical" evidence="1">
    <location>
        <begin position="164"/>
        <end position="183"/>
    </location>
</feature>
<feature type="transmembrane region" description="Helical" evidence="1">
    <location>
        <begin position="195"/>
        <end position="217"/>
    </location>
</feature>
<feature type="transmembrane region" description="Helical" evidence="1">
    <location>
        <begin position="232"/>
        <end position="249"/>
    </location>
</feature>
<feature type="transmembrane region" description="Helical" evidence="1">
    <location>
        <begin position="270"/>
        <end position="290"/>
    </location>
</feature>
<feature type="transmembrane region" description="Helical" evidence="1">
    <location>
        <begin position="362"/>
        <end position="382"/>
    </location>
</feature>
<feature type="domain" description="EamA">
    <location>
        <begin position="123"/>
        <end position="228"/>
    </location>
</feature>
<feature type="sequence conflict" description="In Ref. 5; AK060343." evidence="3" ref="5">
    <original>G</original>
    <variation>D</variation>
    <location>
        <position position="31"/>
    </location>
</feature>
<gene>
    <name type="primary">PPT3</name>
    <name type="ordered locus">Os01g0172100</name>
    <name type="ordered locus">LOC_Os01g07730</name>
    <name type="ORF">P0583G08.29</name>
</gene>